<protein>
    <recommendedName>
        <fullName evidence="1">Enolase</fullName>
        <ecNumber evidence="1">4.2.1.11</ecNumber>
    </recommendedName>
    <alternativeName>
        <fullName evidence="1">2-phospho-D-glycerate hydro-lyase</fullName>
    </alternativeName>
    <alternativeName>
        <fullName evidence="1">2-phosphoglycerate dehydratase</fullName>
    </alternativeName>
</protein>
<sequence>MTAIVDIIGREILDSRGNPTVEVDVVLEDGAVGRAAVPSGASTGAHEAVELRDGDKGRYGGKGVQKAVEAINGELFDALGGMDAESQVQIDEVMIALDGTPNKARLGANAILGISLAVAKAAAESYDMPLYRYVGGTSARMLPVPMMNIINGGMHADNPIDFQEFMIMPVGADSFSEALRCGAEIFHTLKSELKKAGHNTNVGDEGGFAPNLPSADAALDFVMAAITKAGYKPGEDVMLALDCAATEFFKDGAYVYGGENKTRSVSEQAKYLADLAARYPIVSIEDGMSEDDMDGWKELTDIVGSKCQLVGDDLFVTNVTRLADGIKNGRANSILIKVNQIGTLTETLAAVEMAHKAGYTAVMSHRSGETEDSTIADLAVATNCGQIKTGSLARADRTSKYNQLLRIEQELGSQALYAGKAALKALR</sequence>
<proteinExistence type="inferred from homology"/>
<keyword id="KW-0963">Cytoplasm</keyword>
<keyword id="KW-0324">Glycolysis</keyword>
<keyword id="KW-0456">Lyase</keyword>
<keyword id="KW-0460">Magnesium</keyword>
<keyword id="KW-0479">Metal-binding</keyword>
<keyword id="KW-0964">Secreted</keyword>
<accession>Q07ND9</accession>
<comment type="function">
    <text evidence="1">Catalyzes the reversible conversion of 2-phosphoglycerate (2-PG) into phosphoenolpyruvate (PEP). It is essential for the degradation of carbohydrates via glycolysis.</text>
</comment>
<comment type="catalytic activity">
    <reaction evidence="1">
        <text>(2R)-2-phosphoglycerate = phosphoenolpyruvate + H2O</text>
        <dbReference type="Rhea" id="RHEA:10164"/>
        <dbReference type="ChEBI" id="CHEBI:15377"/>
        <dbReference type="ChEBI" id="CHEBI:58289"/>
        <dbReference type="ChEBI" id="CHEBI:58702"/>
        <dbReference type="EC" id="4.2.1.11"/>
    </reaction>
</comment>
<comment type="cofactor">
    <cofactor evidence="1">
        <name>Mg(2+)</name>
        <dbReference type="ChEBI" id="CHEBI:18420"/>
    </cofactor>
    <text evidence="1">Binds a second Mg(2+) ion via substrate during catalysis.</text>
</comment>
<comment type="pathway">
    <text evidence="1">Carbohydrate degradation; glycolysis; pyruvate from D-glyceraldehyde 3-phosphate: step 4/5.</text>
</comment>
<comment type="subcellular location">
    <subcellularLocation>
        <location evidence="1">Cytoplasm</location>
    </subcellularLocation>
    <subcellularLocation>
        <location evidence="1">Secreted</location>
    </subcellularLocation>
    <subcellularLocation>
        <location evidence="1">Cell surface</location>
    </subcellularLocation>
    <text evidence="1">Fractions of enolase are present in both the cytoplasm and on the cell surface.</text>
</comment>
<comment type="similarity">
    <text evidence="1">Belongs to the enolase family.</text>
</comment>
<dbReference type="EC" id="4.2.1.11" evidence="1"/>
<dbReference type="EMBL" id="CP000463">
    <property type="protein sequence ID" value="ABJ06545.1"/>
    <property type="molecule type" value="Genomic_DNA"/>
</dbReference>
<dbReference type="SMR" id="Q07ND9"/>
<dbReference type="STRING" id="316055.RPE_2607"/>
<dbReference type="KEGG" id="rpe:RPE_2607"/>
<dbReference type="eggNOG" id="COG0148">
    <property type="taxonomic scope" value="Bacteria"/>
</dbReference>
<dbReference type="HOGENOM" id="CLU_031223_2_1_5"/>
<dbReference type="OrthoDB" id="9804716at2"/>
<dbReference type="UniPathway" id="UPA00109">
    <property type="reaction ID" value="UER00187"/>
</dbReference>
<dbReference type="GO" id="GO:0009986">
    <property type="term" value="C:cell surface"/>
    <property type="evidence" value="ECO:0007669"/>
    <property type="project" value="UniProtKB-SubCell"/>
</dbReference>
<dbReference type="GO" id="GO:0005576">
    <property type="term" value="C:extracellular region"/>
    <property type="evidence" value="ECO:0007669"/>
    <property type="project" value="UniProtKB-SubCell"/>
</dbReference>
<dbReference type="GO" id="GO:0000015">
    <property type="term" value="C:phosphopyruvate hydratase complex"/>
    <property type="evidence" value="ECO:0007669"/>
    <property type="project" value="InterPro"/>
</dbReference>
<dbReference type="GO" id="GO:0000287">
    <property type="term" value="F:magnesium ion binding"/>
    <property type="evidence" value="ECO:0007669"/>
    <property type="project" value="UniProtKB-UniRule"/>
</dbReference>
<dbReference type="GO" id="GO:0004634">
    <property type="term" value="F:phosphopyruvate hydratase activity"/>
    <property type="evidence" value="ECO:0007669"/>
    <property type="project" value="UniProtKB-UniRule"/>
</dbReference>
<dbReference type="GO" id="GO:0006096">
    <property type="term" value="P:glycolytic process"/>
    <property type="evidence" value="ECO:0007669"/>
    <property type="project" value="UniProtKB-UniRule"/>
</dbReference>
<dbReference type="CDD" id="cd03313">
    <property type="entry name" value="enolase"/>
    <property type="match status" value="1"/>
</dbReference>
<dbReference type="FunFam" id="3.20.20.120:FF:000001">
    <property type="entry name" value="Enolase"/>
    <property type="match status" value="1"/>
</dbReference>
<dbReference type="FunFam" id="3.30.390.10:FF:000001">
    <property type="entry name" value="Enolase"/>
    <property type="match status" value="1"/>
</dbReference>
<dbReference type="Gene3D" id="3.20.20.120">
    <property type="entry name" value="Enolase-like C-terminal domain"/>
    <property type="match status" value="1"/>
</dbReference>
<dbReference type="Gene3D" id="3.30.390.10">
    <property type="entry name" value="Enolase-like, N-terminal domain"/>
    <property type="match status" value="1"/>
</dbReference>
<dbReference type="HAMAP" id="MF_00318">
    <property type="entry name" value="Enolase"/>
    <property type="match status" value="1"/>
</dbReference>
<dbReference type="InterPro" id="IPR000941">
    <property type="entry name" value="Enolase"/>
</dbReference>
<dbReference type="InterPro" id="IPR036849">
    <property type="entry name" value="Enolase-like_C_sf"/>
</dbReference>
<dbReference type="InterPro" id="IPR029017">
    <property type="entry name" value="Enolase-like_N"/>
</dbReference>
<dbReference type="InterPro" id="IPR020810">
    <property type="entry name" value="Enolase_C"/>
</dbReference>
<dbReference type="InterPro" id="IPR020809">
    <property type="entry name" value="Enolase_CS"/>
</dbReference>
<dbReference type="InterPro" id="IPR020811">
    <property type="entry name" value="Enolase_N"/>
</dbReference>
<dbReference type="NCBIfam" id="TIGR01060">
    <property type="entry name" value="eno"/>
    <property type="match status" value="1"/>
</dbReference>
<dbReference type="PANTHER" id="PTHR11902">
    <property type="entry name" value="ENOLASE"/>
    <property type="match status" value="1"/>
</dbReference>
<dbReference type="PANTHER" id="PTHR11902:SF1">
    <property type="entry name" value="ENOLASE"/>
    <property type="match status" value="1"/>
</dbReference>
<dbReference type="Pfam" id="PF00113">
    <property type="entry name" value="Enolase_C"/>
    <property type="match status" value="1"/>
</dbReference>
<dbReference type="Pfam" id="PF03952">
    <property type="entry name" value="Enolase_N"/>
    <property type="match status" value="1"/>
</dbReference>
<dbReference type="PIRSF" id="PIRSF001400">
    <property type="entry name" value="Enolase"/>
    <property type="match status" value="1"/>
</dbReference>
<dbReference type="PRINTS" id="PR00148">
    <property type="entry name" value="ENOLASE"/>
</dbReference>
<dbReference type="SFLD" id="SFLDS00001">
    <property type="entry name" value="Enolase"/>
    <property type="match status" value="1"/>
</dbReference>
<dbReference type="SFLD" id="SFLDF00002">
    <property type="entry name" value="enolase"/>
    <property type="match status" value="1"/>
</dbReference>
<dbReference type="SMART" id="SM01192">
    <property type="entry name" value="Enolase_C"/>
    <property type="match status" value="1"/>
</dbReference>
<dbReference type="SMART" id="SM01193">
    <property type="entry name" value="Enolase_N"/>
    <property type="match status" value="1"/>
</dbReference>
<dbReference type="SUPFAM" id="SSF51604">
    <property type="entry name" value="Enolase C-terminal domain-like"/>
    <property type="match status" value="1"/>
</dbReference>
<dbReference type="SUPFAM" id="SSF54826">
    <property type="entry name" value="Enolase N-terminal domain-like"/>
    <property type="match status" value="1"/>
</dbReference>
<dbReference type="PROSITE" id="PS00164">
    <property type="entry name" value="ENOLASE"/>
    <property type="match status" value="1"/>
</dbReference>
<feature type="chain" id="PRO_0000280874" description="Enolase">
    <location>
        <begin position="1"/>
        <end position="427"/>
    </location>
</feature>
<feature type="active site" description="Proton donor" evidence="1">
    <location>
        <position position="205"/>
    </location>
</feature>
<feature type="active site" description="Proton acceptor" evidence="1">
    <location>
        <position position="337"/>
    </location>
</feature>
<feature type="binding site" evidence="1">
    <location>
        <position position="163"/>
    </location>
    <ligand>
        <name>(2R)-2-phosphoglycerate</name>
        <dbReference type="ChEBI" id="CHEBI:58289"/>
    </ligand>
</feature>
<feature type="binding site" evidence="1">
    <location>
        <position position="242"/>
    </location>
    <ligand>
        <name>Mg(2+)</name>
        <dbReference type="ChEBI" id="CHEBI:18420"/>
    </ligand>
</feature>
<feature type="binding site" evidence="1">
    <location>
        <position position="285"/>
    </location>
    <ligand>
        <name>Mg(2+)</name>
        <dbReference type="ChEBI" id="CHEBI:18420"/>
    </ligand>
</feature>
<feature type="binding site" evidence="1">
    <location>
        <position position="312"/>
    </location>
    <ligand>
        <name>Mg(2+)</name>
        <dbReference type="ChEBI" id="CHEBI:18420"/>
    </ligand>
</feature>
<feature type="binding site" evidence="1">
    <location>
        <position position="337"/>
    </location>
    <ligand>
        <name>(2R)-2-phosphoglycerate</name>
        <dbReference type="ChEBI" id="CHEBI:58289"/>
    </ligand>
</feature>
<feature type="binding site" evidence="1">
    <location>
        <position position="366"/>
    </location>
    <ligand>
        <name>(2R)-2-phosphoglycerate</name>
        <dbReference type="ChEBI" id="CHEBI:58289"/>
    </ligand>
</feature>
<feature type="binding site" evidence="1">
    <location>
        <position position="367"/>
    </location>
    <ligand>
        <name>(2R)-2-phosphoglycerate</name>
        <dbReference type="ChEBI" id="CHEBI:58289"/>
    </ligand>
</feature>
<feature type="binding site" evidence="1">
    <location>
        <position position="388"/>
    </location>
    <ligand>
        <name>(2R)-2-phosphoglycerate</name>
        <dbReference type="ChEBI" id="CHEBI:58289"/>
    </ligand>
</feature>
<organism>
    <name type="scientific">Rhodopseudomonas palustris (strain BisA53)</name>
    <dbReference type="NCBI Taxonomy" id="316055"/>
    <lineage>
        <taxon>Bacteria</taxon>
        <taxon>Pseudomonadati</taxon>
        <taxon>Pseudomonadota</taxon>
        <taxon>Alphaproteobacteria</taxon>
        <taxon>Hyphomicrobiales</taxon>
        <taxon>Nitrobacteraceae</taxon>
        <taxon>Rhodopseudomonas</taxon>
    </lineage>
</organism>
<evidence type="ECO:0000255" key="1">
    <source>
        <dbReference type="HAMAP-Rule" id="MF_00318"/>
    </source>
</evidence>
<name>ENO_RHOP5</name>
<gene>
    <name evidence="1" type="primary">eno</name>
    <name type="ordered locus">RPE_2607</name>
</gene>
<reference key="1">
    <citation type="submission" date="2006-09" db="EMBL/GenBank/DDBJ databases">
        <title>Complete sequence of Rhodopseudomonas palustris BisA53.</title>
        <authorList>
            <consortium name="US DOE Joint Genome Institute"/>
            <person name="Copeland A."/>
            <person name="Lucas S."/>
            <person name="Lapidus A."/>
            <person name="Barry K."/>
            <person name="Detter J.C."/>
            <person name="Glavina del Rio T."/>
            <person name="Hammon N."/>
            <person name="Israni S."/>
            <person name="Dalin E."/>
            <person name="Tice H."/>
            <person name="Pitluck S."/>
            <person name="Chain P."/>
            <person name="Malfatti S."/>
            <person name="Shin M."/>
            <person name="Vergez L."/>
            <person name="Schmutz J."/>
            <person name="Larimer F."/>
            <person name="Land M."/>
            <person name="Hauser L."/>
            <person name="Pelletier D.A."/>
            <person name="Kyrpides N."/>
            <person name="Kim E."/>
            <person name="Harwood C.S."/>
            <person name="Oda Y."/>
            <person name="Richardson P."/>
        </authorList>
    </citation>
    <scope>NUCLEOTIDE SEQUENCE [LARGE SCALE GENOMIC DNA]</scope>
    <source>
        <strain>BisA53</strain>
    </source>
</reference>